<gene>
    <name type="primary">MDGA1</name>
    <name type="synonym">MAMDC3</name>
</gene>
<comment type="function">
    <text evidence="1 9">Required for radial migration of cortical neurons in the superficial layer of the neocortex (By similarity). Plays a role in the formation or maintenance of inhibitory synapses. May function by inhibiting the activity of NLGN2.</text>
</comment>
<comment type="subunit">
    <text evidence="1 9">Interacts heterophilically through its MAM domain with proteins in axon-rich regions and through its Ig-like domains with proteins in differentiating muscle (By similarity). Interacts (through the Ig-like domains) with NLGN2.</text>
</comment>
<comment type="subcellular location">
    <subcellularLocation>
        <location evidence="7">Cell membrane</location>
        <topology evidence="7">Lipid-anchor</topology>
        <topology evidence="7">GPI-anchor</topology>
    </subcellularLocation>
    <text>Associated with lipid rafts.</text>
</comment>
<comment type="alternative products">
    <event type="alternative splicing"/>
    <isoform>
        <id>Q8NFP4-1</id>
        <name>1</name>
        <sequence type="displayed"/>
    </isoform>
    <isoform>
        <id>Q8NFP4-2</id>
        <name>2</name>
        <sequence type="described" ref="VSP_009835"/>
    </isoform>
</comment>
<comment type="tissue specificity">
    <text>Has been found in brain, heart, skeletal muscle and kidney. Found to be overexpressed in tumor tissues.</text>
</comment>
<comment type="sequence caution" evidence="12">
    <conflict type="erroneous initiation">
        <sequence resource="EMBL-CDS" id="BAC03502"/>
    </conflict>
</comment>
<keyword id="KW-0002">3D-structure</keyword>
<keyword id="KW-0025">Alternative splicing</keyword>
<keyword id="KW-1003">Cell membrane</keyword>
<keyword id="KW-0217">Developmental protein</keyword>
<keyword id="KW-0221">Differentiation</keyword>
<keyword id="KW-1015">Disulfide bond</keyword>
<keyword id="KW-0325">Glycoprotein</keyword>
<keyword id="KW-0336">GPI-anchor</keyword>
<keyword id="KW-0393">Immunoglobulin domain</keyword>
<keyword id="KW-0449">Lipoprotein</keyword>
<keyword id="KW-0472">Membrane</keyword>
<keyword id="KW-0524">Neurogenesis</keyword>
<keyword id="KW-1267">Proteomics identification</keyword>
<keyword id="KW-1185">Reference proteome</keyword>
<keyword id="KW-0677">Repeat</keyword>
<keyword id="KW-0732">Signal</keyword>
<dbReference type="EMBL" id="AF478693">
    <property type="protein sequence ID" value="AAM77220.1"/>
    <property type="molecule type" value="mRNA"/>
</dbReference>
<dbReference type="EMBL" id="AL049553">
    <property type="status" value="NOT_ANNOTATED_CDS"/>
    <property type="molecule type" value="Genomic_DNA"/>
</dbReference>
<dbReference type="EMBL" id="CH471081">
    <property type="protein sequence ID" value="EAX03952.1"/>
    <property type="molecule type" value="Genomic_DNA"/>
</dbReference>
<dbReference type="EMBL" id="AK090677">
    <property type="protein sequence ID" value="BAC03502.1"/>
    <property type="status" value="ALT_INIT"/>
    <property type="molecule type" value="mRNA"/>
</dbReference>
<dbReference type="CCDS" id="CCDS47417.1">
    <molecule id="Q8NFP4-1"/>
</dbReference>
<dbReference type="RefSeq" id="NP_705691.1">
    <molecule id="Q8NFP4-1"/>
    <property type="nucleotide sequence ID" value="NM_153487.4"/>
</dbReference>
<dbReference type="RefSeq" id="XP_006715119.1">
    <molecule id="Q8NFP4-2"/>
    <property type="nucleotide sequence ID" value="XM_006715056.4"/>
</dbReference>
<dbReference type="RefSeq" id="XP_054211132.1">
    <molecule id="Q8NFP4-2"/>
    <property type="nucleotide sequence ID" value="XM_054355157.1"/>
</dbReference>
<dbReference type="PDB" id="5V5V">
    <property type="method" value="X-ray"/>
    <property type="resolution" value="4.11 A"/>
    <property type="chains" value="G/H/I/J/K/L=22-237"/>
</dbReference>
<dbReference type="PDB" id="5V5W">
    <property type="method" value="X-ray"/>
    <property type="resolution" value="2.72 A"/>
    <property type="chains" value="A=22-237"/>
</dbReference>
<dbReference type="PDB" id="5XEQ">
    <property type="method" value="X-ray"/>
    <property type="resolution" value="3.14 A"/>
    <property type="chains" value="B=19-330"/>
</dbReference>
<dbReference type="PDBsum" id="5V5V"/>
<dbReference type="PDBsum" id="5V5W"/>
<dbReference type="PDBsum" id="5XEQ"/>
<dbReference type="SMR" id="Q8NFP4"/>
<dbReference type="BioGRID" id="129333">
    <property type="interactions" value="3"/>
</dbReference>
<dbReference type="FunCoup" id="Q8NFP4">
    <property type="interactions" value="119"/>
</dbReference>
<dbReference type="IntAct" id="Q8NFP4">
    <property type="interactions" value="2"/>
</dbReference>
<dbReference type="STRING" id="9606.ENSP00000402584"/>
<dbReference type="GlyCosmos" id="Q8NFP4">
    <property type="glycosylation" value="11 sites, No reported glycans"/>
</dbReference>
<dbReference type="GlyGen" id="Q8NFP4">
    <property type="glycosylation" value="11 sites, 3 N-linked glycans (4 sites)"/>
</dbReference>
<dbReference type="iPTMnet" id="Q8NFP4"/>
<dbReference type="PhosphoSitePlus" id="Q8NFP4"/>
<dbReference type="BioMuta" id="MDGA1"/>
<dbReference type="DMDM" id="46396459"/>
<dbReference type="jPOST" id="Q8NFP4"/>
<dbReference type="MassIVE" id="Q8NFP4"/>
<dbReference type="PaxDb" id="9606-ENSP00000402584"/>
<dbReference type="PeptideAtlas" id="Q8NFP4"/>
<dbReference type="ProteomicsDB" id="73330">
    <molecule id="Q8NFP4-1"/>
</dbReference>
<dbReference type="ProteomicsDB" id="73331">
    <molecule id="Q8NFP4-2"/>
</dbReference>
<dbReference type="Antibodypedia" id="29838">
    <property type="antibodies" value="31 antibodies from 13 providers"/>
</dbReference>
<dbReference type="DNASU" id="266727"/>
<dbReference type="Ensembl" id="ENST00000434837.8">
    <molecule id="Q8NFP4-1"/>
    <property type="protein sequence ID" value="ENSP00000402584.2"/>
    <property type="gene ID" value="ENSG00000112139.17"/>
</dbReference>
<dbReference type="Ensembl" id="ENST00000505425.5">
    <molecule id="Q8NFP4-2"/>
    <property type="protein sequence ID" value="ENSP00000422042.1"/>
    <property type="gene ID" value="ENSG00000112139.17"/>
</dbReference>
<dbReference type="GeneID" id="266727"/>
<dbReference type="KEGG" id="hsa:266727"/>
<dbReference type="MANE-Select" id="ENST00000434837.8">
    <property type="protein sequence ID" value="ENSP00000402584.2"/>
    <property type="RefSeq nucleotide sequence ID" value="NM_153487.4"/>
    <property type="RefSeq protein sequence ID" value="NP_705691.1"/>
</dbReference>
<dbReference type="UCSC" id="uc003onu.2">
    <molecule id="Q8NFP4-1"/>
    <property type="organism name" value="human"/>
</dbReference>
<dbReference type="AGR" id="HGNC:19267"/>
<dbReference type="CTD" id="266727"/>
<dbReference type="DisGeNET" id="266727"/>
<dbReference type="GeneCards" id="MDGA1"/>
<dbReference type="HGNC" id="HGNC:19267">
    <property type="gene designation" value="MDGA1"/>
</dbReference>
<dbReference type="HPA" id="ENSG00000112139">
    <property type="expression patterns" value="Tissue enriched (brain)"/>
</dbReference>
<dbReference type="MIM" id="609626">
    <property type="type" value="gene"/>
</dbReference>
<dbReference type="neXtProt" id="NX_Q8NFP4"/>
<dbReference type="OpenTargets" id="ENSG00000112139"/>
<dbReference type="PharmGKB" id="PA134864540"/>
<dbReference type="VEuPathDB" id="HostDB:ENSG00000112139"/>
<dbReference type="eggNOG" id="ENOG502QUWH">
    <property type="taxonomic scope" value="Eukaryota"/>
</dbReference>
<dbReference type="GeneTree" id="ENSGT00940000159201"/>
<dbReference type="HOGENOM" id="CLU_014908_0_0_1"/>
<dbReference type="InParanoid" id="Q8NFP4"/>
<dbReference type="OMA" id="NSWQQAH"/>
<dbReference type="OrthoDB" id="6107927at2759"/>
<dbReference type="PAN-GO" id="Q8NFP4">
    <property type="GO annotations" value="2 GO annotations based on evolutionary models"/>
</dbReference>
<dbReference type="PhylomeDB" id="Q8NFP4"/>
<dbReference type="TreeFam" id="TF330345"/>
<dbReference type="PathwayCommons" id="Q8NFP4"/>
<dbReference type="Reactome" id="R-HSA-163125">
    <property type="pathway name" value="Post-translational modification: synthesis of GPI-anchored proteins"/>
</dbReference>
<dbReference type="BioGRID-ORCS" id="266727">
    <property type="hits" value="12 hits in 1154 CRISPR screens"/>
</dbReference>
<dbReference type="ChiTaRS" id="MDGA1">
    <property type="organism name" value="human"/>
</dbReference>
<dbReference type="GenomeRNAi" id="266727"/>
<dbReference type="Pharos" id="Q8NFP4">
    <property type="development level" value="Tbio"/>
</dbReference>
<dbReference type="PRO" id="PR:Q8NFP4"/>
<dbReference type="Proteomes" id="UP000005640">
    <property type="component" value="Chromosome 6"/>
</dbReference>
<dbReference type="RNAct" id="Q8NFP4">
    <property type="molecule type" value="protein"/>
</dbReference>
<dbReference type="Bgee" id="ENSG00000112139">
    <property type="expression patterns" value="Expressed in cardiac muscle of right atrium and 159 other cell types or tissues"/>
</dbReference>
<dbReference type="ExpressionAtlas" id="Q8NFP4">
    <property type="expression patterns" value="baseline and differential"/>
</dbReference>
<dbReference type="GO" id="GO:0030424">
    <property type="term" value="C:axon"/>
    <property type="evidence" value="ECO:0007669"/>
    <property type="project" value="Ensembl"/>
</dbReference>
<dbReference type="GO" id="GO:0009986">
    <property type="term" value="C:cell surface"/>
    <property type="evidence" value="ECO:0007669"/>
    <property type="project" value="Ensembl"/>
</dbReference>
<dbReference type="GO" id="GO:0030425">
    <property type="term" value="C:dendrite"/>
    <property type="evidence" value="ECO:0007669"/>
    <property type="project" value="Ensembl"/>
</dbReference>
<dbReference type="GO" id="GO:0005576">
    <property type="term" value="C:extracellular region"/>
    <property type="evidence" value="ECO:0000304"/>
    <property type="project" value="Reactome"/>
</dbReference>
<dbReference type="GO" id="GO:0005615">
    <property type="term" value="C:extracellular space"/>
    <property type="evidence" value="ECO:0007005"/>
    <property type="project" value="UniProtKB"/>
</dbReference>
<dbReference type="GO" id="GO:0098982">
    <property type="term" value="C:GABA-ergic synapse"/>
    <property type="evidence" value="ECO:0000314"/>
    <property type="project" value="SynGO"/>
</dbReference>
<dbReference type="GO" id="GO:0005794">
    <property type="term" value="C:Golgi apparatus"/>
    <property type="evidence" value="ECO:0000314"/>
    <property type="project" value="HPA"/>
</dbReference>
<dbReference type="GO" id="GO:0005886">
    <property type="term" value="C:plasma membrane"/>
    <property type="evidence" value="ECO:0000314"/>
    <property type="project" value="HPA"/>
</dbReference>
<dbReference type="GO" id="GO:0098552">
    <property type="term" value="C:side of membrane"/>
    <property type="evidence" value="ECO:0007669"/>
    <property type="project" value="UniProtKB-KW"/>
</dbReference>
<dbReference type="GO" id="GO:0007420">
    <property type="term" value="P:brain development"/>
    <property type="evidence" value="ECO:0000250"/>
    <property type="project" value="HGNC-UCL"/>
</dbReference>
<dbReference type="GO" id="GO:0021799">
    <property type="term" value="P:cerebral cortex radially oriented cell migration"/>
    <property type="evidence" value="ECO:0007669"/>
    <property type="project" value="Ensembl"/>
</dbReference>
<dbReference type="GO" id="GO:1904862">
    <property type="term" value="P:inhibitory synapse assembly"/>
    <property type="evidence" value="ECO:0007669"/>
    <property type="project" value="Ensembl"/>
</dbReference>
<dbReference type="GO" id="GO:0001764">
    <property type="term" value="P:neuron migration"/>
    <property type="evidence" value="ECO:0000250"/>
    <property type="project" value="UniProtKB"/>
</dbReference>
<dbReference type="GO" id="GO:0099054">
    <property type="term" value="P:presynapse assembly"/>
    <property type="evidence" value="ECO:0007669"/>
    <property type="project" value="Ensembl"/>
</dbReference>
<dbReference type="GO" id="GO:1905606">
    <property type="term" value="P:regulation of presynapse assembly"/>
    <property type="evidence" value="ECO:0000314"/>
    <property type="project" value="SynGO"/>
</dbReference>
<dbReference type="GO" id="GO:0099179">
    <property type="term" value="P:regulation of synaptic membrane adhesion"/>
    <property type="evidence" value="ECO:0000314"/>
    <property type="project" value="SynGO"/>
</dbReference>
<dbReference type="GO" id="GO:0021527">
    <property type="term" value="P:spinal cord association neuron differentiation"/>
    <property type="evidence" value="ECO:0000250"/>
    <property type="project" value="HGNC-UCL"/>
</dbReference>
<dbReference type="CDD" id="cd00063">
    <property type="entry name" value="FN3"/>
    <property type="match status" value="1"/>
</dbReference>
<dbReference type="CDD" id="cd00096">
    <property type="entry name" value="Ig"/>
    <property type="match status" value="3"/>
</dbReference>
<dbReference type="CDD" id="cd06263">
    <property type="entry name" value="MAM"/>
    <property type="match status" value="1"/>
</dbReference>
<dbReference type="FunFam" id="2.60.40.10:FF:000240">
    <property type="entry name" value="MAM domain containing glycosylphosphatidylinositol anchor 1"/>
    <property type="match status" value="1"/>
</dbReference>
<dbReference type="FunFam" id="2.60.40.10:FF:000262">
    <property type="entry name" value="MAM domain containing glycosylphosphatidylinositol anchor 1"/>
    <property type="match status" value="1"/>
</dbReference>
<dbReference type="FunFam" id="2.60.40.10:FF:000303">
    <property type="entry name" value="MAM domain containing glycosylphosphatidylinositol anchor 1"/>
    <property type="match status" value="1"/>
</dbReference>
<dbReference type="FunFam" id="2.60.40.10:FF:001352">
    <property type="entry name" value="MAM domain containing glycosylphosphatidylinositol anchor 1"/>
    <property type="match status" value="1"/>
</dbReference>
<dbReference type="FunFam" id="2.60.120.200:FF:000019">
    <property type="entry name" value="MAM domain containing glycosylphosphatidylinositol anchor 2"/>
    <property type="match status" value="1"/>
</dbReference>
<dbReference type="FunFam" id="2.60.40.10:FF:000165">
    <property type="entry name" value="MAM domain containing glycosylphosphatidylinositol anchor 2"/>
    <property type="match status" value="1"/>
</dbReference>
<dbReference type="FunFam" id="2.60.40.10:FF:000243">
    <property type="entry name" value="MAM domain-containing glycosylphosphatidylinositol anchor protein 1"/>
    <property type="match status" value="1"/>
</dbReference>
<dbReference type="FunFam" id="2.60.40.10:FF:001287">
    <property type="entry name" value="MAM domain-containing glycosylphosphatidylinositol anchor protein 1"/>
    <property type="match status" value="1"/>
</dbReference>
<dbReference type="Gene3D" id="2.60.120.200">
    <property type="match status" value="1"/>
</dbReference>
<dbReference type="Gene3D" id="2.60.40.10">
    <property type="entry name" value="Immunoglobulins"/>
    <property type="match status" value="7"/>
</dbReference>
<dbReference type="InterPro" id="IPR050958">
    <property type="entry name" value="Cell_Adh-Cytoskel_Orgn"/>
</dbReference>
<dbReference type="InterPro" id="IPR013320">
    <property type="entry name" value="ConA-like_dom_sf"/>
</dbReference>
<dbReference type="InterPro" id="IPR003961">
    <property type="entry name" value="FN3_dom"/>
</dbReference>
<dbReference type="InterPro" id="IPR036116">
    <property type="entry name" value="FN3_sf"/>
</dbReference>
<dbReference type="InterPro" id="IPR007110">
    <property type="entry name" value="Ig-like_dom"/>
</dbReference>
<dbReference type="InterPro" id="IPR036179">
    <property type="entry name" value="Ig-like_dom_sf"/>
</dbReference>
<dbReference type="InterPro" id="IPR013783">
    <property type="entry name" value="Ig-like_fold"/>
</dbReference>
<dbReference type="InterPro" id="IPR013098">
    <property type="entry name" value="Ig_I-set"/>
</dbReference>
<dbReference type="InterPro" id="IPR003599">
    <property type="entry name" value="Ig_sub"/>
</dbReference>
<dbReference type="InterPro" id="IPR003598">
    <property type="entry name" value="Ig_sub2"/>
</dbReference>
<dbReference type="InterPro" id="IPR000998">
    <property type="entry name" value="MAM_dom"/>
</dbReference>
<dbReference type="PANTHER" id="PTHR45080">
    <property type="entry name" value="CONTACTIN 5"/>
    <property type="match status" value="1"/>
</dbReference>
<dbReference type="PANTHER" id="PTHR45080:SF32">
    <property type="entry name" value="MAM DOMAIN CONTAINING GLYCOSYLPHOSPHATIDYLINOSITOL ANCHOR 1"/>
    <property type="match status" value="1"/>
</dbReference>
<dbReference type="Pfam" id="PF07679">
    <property type="entry name" value="I-set"/>
    <property type="match status" value="1"/>
</dbReference>
<dbReference type="Pfam" id="PF13927">
    <property type="entry name" value="Ig_3"/>
    <property type="match status" value="5"/>
</dbReference>
<dbReference type="Pfam" id="PF00629">
    <property type="entry name" value="MAM"/>
    <property type="match status" value="1"/>
</dbReference>
<dbReference type="SMART" id="SM00409">
    <property type="entry name" value="IG"/>
    <property type="match status" value="6"/>
</dbReference>
<dbReference type="SMART" id="SM00408">
    <property type="entry name" value="IGc2"/>
    <property type="match status" value="6"/>
</dbReference>
<dbReference type="SMART" id="SM00137">
    <property type="entry name" value="MAM"/>
    <property type="match status" value="1"/>
</dbReference>
<dbReference type="SUPFAM" id="SSF49899">
    <property type="entry name" value="Concanavalin A-like lectins/glucanases"/>
    <property type="match status" value="1"/>
</dbReference>
<dbReference type="SUPFAM" id="SSF49265">
    <property type="entry name" value="Fibronectin type III"/>
    <property type="match status" value="1"/>
</dbReference>
<dbReference type="SUPFAM" id="SSF48726">
    <property type="entry name" value="Immunoglobulin"/>
    <property type="match status" value="6"/>
</dbReference>
<dbReference type="PROSITE" id="PS50853">
    <property type="entry name" value="FN3"/>
    <property type="match status" value="1"/>
</dbReference>
<dbReference type="PROSITE" id="PS50835">
    <property type="entry name" value="IG_LIKE"/>
    <property type="match status" value="6"/>
</dbReference>
<dbReference type="PROSITE" id="PS50060">
    <property type="entry name" value="MAM_2"/>
    <property type="match status" value="1"/>
</dbReference>
<proteinExistence type="evidence at protein level"/>
<protein>
    <recommendedName>
        <fullName>MAM domain-containing glycosylphosphatidylinositol anchor protein 1</fullName>
    </recommendedName>
    <alternativeName>
        <fullName>GPI and MAM protein</fullName>
        <shortName>GPIM</shortName>
    </alternativeName>
    <alternativeName>
        <fullName>Glycosylphosphatidylinositol-MAM</fullName>
    </alternativeName>
    <alternativeName>
        <fullName>MAM domain-containing protein 3</fullName>
    </alternativeName>
</protein>
<reference key="1">
    <citation type="journal article" date="2002" name="Oncogene">
        <title>Genomic organization of a novel glycosylphosphatidylinositol MAM gene expressed in human tissues and tumors.</title>
        <authorList>
            <person name="De Juan C."/>
            <person name="Iniesta P."/>
            <person name="Gonzalez-Quevedo R."/>
            <person name="Moran A."/>
            <person name="Sanchez-Pernaute A."/>
            <person name="Torres A.J."/>
            <person name="Balibrea J.L."/>
            <person name="Diaz-Rubio E."/>
            <person name="Cruces J."/>
            <person name="Benito M."/>
        </authorList>
    </citation>
    <scope>NUCLEOTIDE SEQUENCE [MRNA] (ISOFORM 1)</scope>
</reference>
<reference key="2">
    <citation type="journal article" date="2003" name="Nature">
        <title>The DNA sequence and analysis of human chromosome 6.</title>
        <authorList>
            <person name="Mungall A.J."/>
            <person name="Palmer S.A."/>
            <person name="Sims S.K."/>
            <person name="Edwards C.A."/>
            <person name="Ashurst J.L."/>
            <person name="Wilming L."/>
            <person name="Jones M.C."/>
            <person name="Horton R."/>
            <person name="Hunt S.E."/>
            <person name="Scott C.E."/>
            <person name="Gilbert J.G.R."/>
            <person name="Clamp M.E."/>
            <person name="Bethel G."/>
            <person name="Milne S."/>
            <person name="Ainscough R."/>
            <person name="Almeida J.P."/>
            <person name="Ambrose K.D."/>
            <person name="Andrews T.D."/>
            <person name="Ashwell R.I.S."/>
            <person name="Babbage A.K."/>
            <person name="Bagguley C.L."/>
            <person name="Bailey J."/>
            <person name="Banerjee R."/>
            <person name="Barker D.J."/>
            <person name="Barlow K.F."/>
            <person name="Bates K."/>
            <person name="Beare D.M."/>
            <person name="Beasley H."/>
            <person name="Beasley O."/>
            <person name="Bird C.P."/>
            <person name="Blakey S.E."/>
            <person name="Bray-Allen S."/>
            <person name="Brook J."/>
            <person name="Brown A.J."/>
            <person name="Brown J.Y."/>
            <person name="Burford D.C."/>
            <person name="Burrill W."/>
            <person name="Burton J."/>
            <person name="Carder C."/>
            <person name="Carter N.P."/>
            <person name="Chapman J.C."/>
            <person name="Clark S.Y."/>
            <person name="Clark G."/>
            <person name="Clee C.M."/>
            <person name="Clegg S."/>
            <person name="Cobley V."/>
            <person name="Collier R.E."/>
            <person name="Collins J.E."/>
            <person name="Colman L.K."/>
            <person name="Corby N.R."/>
            <person name="Coville G.J."/>
            <person name="Culley K.M."/>
            <person name="Dhami P."/>
            <person name="Davies J."/>
            <person name="Dunn M."/>
            <person name="Earthrowl M.E."/>
            <person name="Ellington A.E."/>
            <person name="Evans K.A."/>
            <person name="Faulkner L."/>
            <person name="Francis M.D."/>
            <person name="Frankish A."/>
            <person name="Frankland J."/>
            <person name="French L."/>
            <person name="Garner P."/>
            <person name="Garnett J."/>
            <person name="Ghori M.J."/>
            <person name="Gilby L.M."/>
            <person name="Gillson C.J."/>
            <person name="Glithero R.J."/>
            <person name="Grafham D.V."/>
            <person name="Grant M."/>
            <person name="Gribble S."/>
            <person name="Griffiths C."/>
            <person name="Griffiths M.N.D."/>
            <person name="Hall R."/>
            <person name="Halls K.S."/>
            <person name="Hammond S."/>
            <person name="Harley J.L."/>
            <person name="Hart E.A."/>
            <person name="Heath P.D."/>
            <person name="Heathcott R."/>
            <person name="Holmes S.J."/>
            <person name="Howden P.J."/>
            <person name="Howe K.L."/>
            <person name="Howell G.R."/>
            <person name="Huckle E."/>
            <person name="Humphray S.J."/>
            <person name="Humphries M.D."/>
            <person name="Hunt A.R."/>
            <person name="Johnson C.M."/>
            <person name="Joy A.A."/>
            <person name="Kay M."/>
            <person name="Keenan S.J."/>
            <person name="Kimberley A.M."/>
            <person name="King A."/>
            <person name="Laird G.K."/>
            <person name="Langford C."/>
            <person name="Lawlor S."/>
            <person name="Leongamornlert D.A."/>
            <person name="Leversha M."/>
            <person name="Lloyd C.R."/>
            <person name="Lloyd D.M."/>
            <person name="Loveland J.E."/>
            <person name="Lovell J."/>
            <person name="Martin S."/>
            <person name="Mashreghi-Mohammadi M."/>
            <person name="Maslen G.L."/>
            <person name="Matthews L."/>
            <person name="McCann O.T."/>
            <person name="McLaren S.J."/>
            <person name="McLay K."/>
            <person name="McMurray A."/>
            <person name="Moore M.J.F."/>
            <person name="Mullikin J.C."/>
            <person name="Niblett D."/>
            <person name="Nickerson T."/>
            <person name="Novik K.L."/>
            <person name="Oliver K."/>
            <person name="Overton-Larty E.K."/>
            <person name="Parker A."/>
            <person name="Patel R."/>
            <person name="Pearce A.V."/>
            <person name="Peck A.I."/>
            <person name="Phillimore B.J.C.T."/>
            <person name="Phillips S."/>
            <person name="Plumb R.W."/>
            <person name="Porter K.M."/>
            <person name="Ramsey Y."/>
            <person name="Ranby S.A."/>
            <person name="Rice C.M."/>
            <person name="Ross M.T."/>
            <person name="Searle S.M."/>
            <person name="Sehra H.K."/>
            <person name="Sheridan E."/>
            <person name="Skuce C.D."/>
            <person name="Smith S."/>
            <person name="Smith M."/>
            <person name="Spraggon L."/>
            <person name="Squares S.L."/>
            <person name="Steward C.A."/>
            <person name="Sycamore N."/>
            <person name="Tamlyn-Hall G."/>
            <person name="Tester J."/>
            <person name="Theaker A.J."/>
            <person name="Thomas D.W."/>
            <person name="Thorpe A."/>
            <person name="Tracey A."/>
            <person name="Tromans A."/>
            <person name="Tubby B."/>
            <person name="Wall M."/>
            <person name="Wallis J.M."/>
            <person name="West A.P."/>
            <person name="White S.S."/>
            <person name="Whitehead S.L."/>
            <person name="Whittaker H."/>
            <person name="Wild A."/>
            <person name="Willey D.J."/>
            <person name="Wilmer T.E."/>
            <person name="Wood J.M."/>
            <person name="Wray P.W."/>
            <person name="Wyatt J.C."/>
            <person name="Young L."/>
            <person name="Younger R.M."/>
            <person name="Bentley D.R."/>
            <person name="Coulson A."/>
            <person name="Durbin R.M."/>
            <person name="Hubbard T."/>
            <person name="Sulston J.E."/>
            <person name="Dunham I."/>
            <person name="Rogers J."/>
            <person name="Beck S."/>
        </authorList>
    </citation>
    <scope>NUCLEOTIDE SEQUENCE [LARGE SCALE GENOMIC DNA]</scope>
</reference>
<reference key="3">
    <citation type="submission" date="2005-07" db="EMBL/GenBank/DDBJ databases">
        <authorList>
            <person name="Mural R.J."/>
            <person name="Istrail S."/>
            <person name="Sutton G.G."/>
            <person name="Florea L."/>
            <person name="Halpern A.L."/>
            <person name="Mobarry C.M."/>
            <person name="Lippert R."/>
            <person name="Walenz B."/>
            <person name="Shatkay H."/>
            <person name="Dew I."/>
            <person name="Miller J.R."/>
            <person name="Flanigan M.J."/>
            <person name="Edwards N.J."/>
            <person name="Bolanos R."/>
            <person name="Fasulo D."/>
            <person name="Halldorsson B.V."/>
            <person name="Hannenhalli S."/>
            <person name="Turner R."/>
            <person name="Yooseph S."/>
            <person name="Lu F."/>
            <person name="Nusskern D.R."/>
            <person name="Shue B.C."/>
            <person name="Zheng X.H."/>
            <person name="Zhong F."/>
            <person name="Delcher A.L."/>
            <person name="Huson D.H."/>
            <person name="Kravitz S.A."/>
            <person name="Mouchard L."/>
            <person name="Reinert K."/>
            <person name="Remington K.A."/>
            <person name="Clark A.G."/>
            <person name="Waterman M.S."/>
            <person name="Eichler E.E."/>
            <person name="Adams M.D."/>
            <person name="Hunkapiller M.W."/>
            <person name="Myers E.W."/>
            <person name="Venter J.C."/>
        </authorList>
    </citation>
    <scope>NUCLEOTIDE SEQUENCE [LARGE SCALE GENOMIC DNA]</scope>
</reference>
<reference key="4">
    <citation type="journal article" date="2004" name="Nat. Genet.">
        <title>Complete sequencing and characterization of 21,243 full-length human cDNAs.</title>
        <authorList>
            <person name="Ota T."/>
            <person name="Suzuki Y."/>
            <person name="Nishikawa T."/>
            <person name="Otsuki T."/>
            <person name="Sugiyama T."/>
            <person name="Irie R."/>
            <person name="Wakamatsu A."/>
            <person name="Hayashi K."/>
            <person name="Sato H."/>
            <person name="Nagai K."/>
            <person name="Kimura K."/>
            <person name="Makita H."/>
            <person name="Sekine M."/>
            <person name="Obayashi M."/>
            <person name="Nishi T."/>
            <person name="Shibahara T."/>
            <person name="Tanaka T."/>
            <person name="Ishii S."/>
            <person name="Yamamoto J."/>
            <person name="Saito K."/>
            <person name="Kawai Y."/>
            <person name="Isono Y."/>
            <person name="Nakamura Y."/>
            <person name="Nagahari K."/>
            <person name="Murakami K."/>
            <person name="Yasuda T."/>
            <person name="Iwayanagi T."/>
            <person name="Wagatsuma M."/>
            <person name="Shiratori A."/>
            <person name="Sudo H."/>
            <person name="Hosoiri T."/>
            <person name="Kaku Y."/>
            <person name="Kodaira H."/>
            <person name="Kondo H."/>
            <person name="Sugawara M."/>
            <person name="Takahashi M."/>
            <person name="Kanda K."/>
            <person name="Yokoi T."/>
            <person name="Furuya T."/>
            <person name="Kikkawa E."/>
            <person name="Omura Y."/>
            <person name="Abe K."/>
            <person name="Kamihara K."/>
            <person name="Katsuta N."/>
            <person name="Sato K."/>
            <person name="Tanikawa M."/>
            <person name="Yamazaki M."/>
            <person name="Ninomiya K."/>
            <person name="Ishibashi T."/>
            <person name="Yamashita H."/>
            <person name="Murakawa K."/>
            <person name="Fujimori K."/>
            <person name="Tanai H."/>
            <person name="Kimata M."/>
            <person name="Watanabe M."/>
            <person name="Hiraoka S."/>
            <person name="Chiba Y."/>
            <person name="Ishida S."/>
            <person name="Ono Y."/>
            <person name="Takiguchi S."/>
            <person name="Watanabe S."/>
            <person name="Yosida M."/>
            <person name="Hotuta T."/>
            <person name="Kusano J."/>
            <person name="Kanehori K."/>
            <person name="Takahashi-Fujii A."/>
            <person name="Hara H."/>
            <person name="Tanase T.-O."/>
            <person name="Nomura Y."/>
            <person name="Togiya S."/>
            <person name="Komai F."/>
            <person name="Hara R."/>
            <person name="Takeuchi K."/>
            <person name="Arita M."/>
            <person name="Imose N."/>
            <person name="Musashino K."/>
            <person name="Yuuki H."/>
            <person name="Oshima A."/>
            <person name="Sasaki N."/>
            <person name="Aotsuka S."/>
            <person name="Yoshikawa Y."/>
            <person name="Matsunawa H."/>
            <person name="Ichihara T."/>
            <person name="Shiohata N."/>
            <person name="Sano S."/>
            <person name="Moriya S."/>
            <person name="Momiyama H."/>
            <person name="Satoh N."/>
            <person name="Takami S."/>
            <person name="Terashima Y."/>
            <person name="Suzuki O."/>
            <person name="Nakagawa S."/>
            <person name="Senoh A."/>
            <person name="Mizoguchi H."/>
            <person name="Goto Y."/>
            <person name="Shimizu F."/>
            <person name="Wakebe H."/>
            <person name="Hishigaki H."/>
            <person name="Watanabe T."/>
            <person name="Sugiyama A."/>
            <person name="Takemoto M."/>
            <person name="Kawakami B."/>
            <person name="Yamazaki M."/>
            <person name="Watanabe K."/>
            <person name="Kumagai A."/>
            <person name="Itakura S."/>
            <person name="Fukuzumi Y."/>
            <person name="Fujimori Y."/>
            <person name="Komiyama M."/>
            <person name="Tashiro H."/>
            <person name="Tanigami A."/>
            <person name="Fujiwara T."/>
            <person name="Ono T."/>
            <person name="Yamada K."/>
            <person name="Fujii Y."/>
            <person name="Ozaki K."/>
            <person name="Hirao M."/>
            <person name="Ohmori Y."/>
            <person name="Kawabata A."/>
            <person name="Hikiji T."/>
            <person name="Kobatake N."/>
            <person name="Inagaki H."/>
            <person name="Ikema Y."/>
            <person name="Okamoto S."/>
            <person name="Okitani R."/>
            <person name="Kawakami T."/>
            <person name="Noguchi S."/>
            <person name="Itoh T."/>
            <person name="Shigeta K."/>
            <person name="Senba T."/>
            <person name="Matsumura K."/>
            <person name="Nakajima Y."/>
            <person name="Mizuno T."/>
            <person name="Morinaga M."/>
            <person name="Sasaki M."/>
            <person name="Togashi T."/>
            <person name="Oyama M."/>
            <person name="Hata H."/>
            <person name="Watanabe M."/>
            <person name="Komatsu T."/>
            <person name="Mizushima-Sugano J."/>
            <person name="Satoh T."/>
            <person name="Shirai Y."/>
            <person name="Takahashi Y."/>
            <person name="Nakagawa K."/>
            <person name="Okumura K."/>
            <person name="Nagase T."/>
            <person name="Nomura N."/>
            <person name="Kikuchi H."/>
            <person name="Masuho Y."/>
            <person name="Yamashita R."/>
            <person name="Nakai K."/>
            <person name="Yada T."/>
            <person name="Nakamura Y."/>
            <person name="Ohara O."/>
            <person name="Isogai T."/>
            <person name="Sugano S."/>
        </authorList>
    </citation>
    <scope>NUCLEOTIDE SEQUENCE [LARGE SCALE MRNA] OF 675-955 (ISOFORM 2)</scope>
    <source>
        <tissue>Cerebellum</tissue>
    </source>
</reference>
<reference key="5">
    <citation type="journal article" date="2005" name="Exp. Cell Res.">
        <title>Characterization of MDGA1, a novel human glycosylphosphatidylinositol-anchored protein localized in lipid rafts.</title>
        <authorList>
            <person name="Diaz-Lopez A."/>
            <person name="Rivas C."/>
            <person name="Iniesta P."/>
            <person name="Moran A."/>
            <person name="Garcia-Aranda C."/>
            <person name="Megias D."/>
            <person name="Sanchez-Pernaute A."/>
            <person name="Torres A."/>
            <person name="Diaz-Rubio E."/>
            <person name="Benito M."/>
            <person name="De Juan C."/>
        </authorList>
    </citation>
    <scope>SUBCELLULAR LOCATION</scope>
    <scope>GLYCOSYLATION</scope>
</reference>
<reference key="6">
    <citation type="journal article" date="2005" name="J. Proteome Res.">
        <title>Human plasma N-glycoproteome analysis by immunoaffinity subtraction, hydrazide chemistry, and mass spectrometry.</title>
        <authorList>
            <person name="Liu T."/>
            <person name="Qian W.-J."/>
            <person name="Gritsenko M.A."/>
            <person name="Camp D.G. II"/>
            <person name="Monroe M.E."/>
            <person name="Moore R.J."/>
            <person name="Smith R.D."/>
        </authorList>
    </citation>
    <scope>GLYCOSYLATION [LARGE SCALE ANALYSIS] AT ASN-247</scope>
    <source>
        <tissue>Plasma</tissue>
    </source>
</reference>
<reference key="7">
    <citation type="journal article" date="2013" name="Proc. Natl. Acad. Sci. U.S.A.">
        <title>MDGAs interact selectively with neuroligin-2 but not other neuroligins to regulate inhibitory synapse development.</title>
        <authorList>
            <person name="Lee K."/>
            <person name="Kim Y."/>
            <person name="Lee S.-J."/>
            <person name="Qiang Y."/>
            <person name="Lee D."/>
            <person name="Lee H.W."/>
            <person name="Kim H."/>
            <person name="Je H.S."/>
            <person name="Suedhof T.C."/>
            <person name="Ko J."/>
        </authorList>
    </citation>
    <scope>FUNCTION</scope>
    <scope>INTERACTION WITH NLGN2</scope>
</reference>
<reference key="8">
    <citation type="journal article" date="2017" name="Clin. Genet.">
        <title>Loss of the proprioception and touch sensation channel PIEZO2 in siblings with a progressive form of contractures.</title>
        <authorList>
            <person name="Mahmud A.A."/>
            <person name="Nahid N.A."/>
            <person name="Nassif C."/>
            <person name="Sayeed M.S."/>
            <person name="Ahmed M.U."/>
            <person name="Parveen M."/>
            <person name="Khalil M.I."/>
            <person name="Islam M.M."/>
            <person name="Nahar Z."/>
            <person name="Rypens F."/>
            <person name="Hamdan F.F."/>
            <person name="Rouleau G.A."/>
            <person name="Hasnat A."/>
            <person name="Michaud J.L."/>
        </authorList>
    </citation>
    <scope>VARIANT SER-935</scope>
</reference>
<organism>
    <name type="scientific">Homo sapiens</name>
    <name type="common">Human</name>
    <dbReference type="NCBI Taxonomy" id="9606"/>
    <lineage>
        <taxon>Eukaryota</taxon>
        <taxon>Metazoa</taxon>
        <taxon>Chordata</taxon>
        <taxon>Craniata</taxon>
        <taxon>Vertebrata</taxon>
        <taxon>Euteleostomi</taxon>
        <taxon>Mammalia</taxon>
        <taxon>Eutheria</taxon>
        <taxon>Euarchontoglires</taxon>
        <taxon>Primates</taxon>
        <taxon>Haplorrhini</taxon>
        <taxon>Catarrhini</taxon>
        <taxon>Hominidae</taxon>
        <taxon>Homo</taxon>
    </lineage>
</organism>
<feature type="signal peptide" evidence="2">
    <location>
        <begin position="1"/>
        <end position="18"/>
    </location>
</feature>
<feature type="chain" id="PRO_0000014864" description="MAM domain-containing glycosylphosphatidylinositol anchor protein 1">
    <location>
        <begin position="19"/>
        <end position="932"/>
    </location>
</feature>
<feature type="propeptide" id="PRO_0000292042" description="Removed in mature form">
    <location>
        <begin position="933"/>
        <end position="955"/>
    </location>
</feature>
<feature type="domain" description="Ig-like 1">
    <location>
        <begin position="24"/>
        <end position="123"/>
    </location>
</feature>
<feature type="domain" description="Ig-like 2">
    <location>
        <begin position="132"/>
        <end position="230"/>
    </location>
</feature>
<feature type="domain" description="Ig-like 3">
    <location>
        <begin position="240"/>
        <end position="323"/>
    </location>
</feature>
<feature type="domain" description="Ig-like 4">
    <location>
        <begin position="338"/>
        <end position="432"/>
    </location>
</feature>
<feature type="domain" description="Ig-like 5">
    <location>
        <begin position="440"/>
        <end position="532"/>
    </location>
</feature>
<feature type="domain" description="Ig-like 6">
    <location>
        <begin position="539"/>
        <end position="631"/>
    </location>
</feature>
<feature type="domain" description="Fibronectin type-III" evidence="5">
    <location>
        <begin position="643"/>
        <end position="743"/>
    </location>
</feature>
<feature type="domain" description="MAM" evidence="4">
    <location>
        <begin position="751"/>
        <end position="918"/>
    </location>
</feature>
<feature type="region of interest" description="Disordered" evidence="6">
    <location>
        <begin position="779"/>
        <end position="798"/>
    </location>
</feature>
<feature type="compositionally biased region" description="Polar residues" evidence="6">
    <location>
        <begin position="779"/>
        <end position="788"/>
    </location>
</feature>
<feature type="lipid moiety-binding region" description="GPI-anchor amidated serine" evidence="2">
    <location>
        <position position="932"/>
    </location>
</feature>
<feature type="glycosylation site" description="N-linked (GlcNAc...) asparagine" evidence="2">
    <location>
        <position position="42"/>
    </location>
</feature>
<feature type="glycosylation site" description="N-linked (GlcNAc...) asparagine" evidence="2">
    <location>
        <position position="90"/>
    </location>
</feature>
<feature type="glycosylation site" description="N-linked (GlcNAc...) asparagine" evidence="2">
    <location>
        <position position="235"/>
    </location>
</feature>
<feature type="glycosylation site" description="N-linked (GlcNAc...) asparagine" evidence="8">
    <location>
        <position position="247"/>
    </location>
</feature>
<feature type="glycosylation site" description="N-linked (GlcNAc...) asparagine" evidence="2">
    <location>
        <position position="257"/>
    </location>
</feature>
<feature type="glycosylation site" description="N-linked (GlcNAc...) asparagine" evidence="2">
    <location>
        <position position="307"/>
    </location>
</feature>
<feature type="glycosylation site" description="N-linked (GlcNAc...) asparagine" evidence="2">
    <location>
        <position position="331"/>
    </location>
</feature>
<feature type="glycosylation site" description="N-linked (GlcNAc...) asparagine" evidence="2">
    <location>
        <position position="432"/>
    </location>
</feature>
<feature type="glycosylation site" description="N-linked (GlcNAc...) asparagine" evidence="2">
    <location>
        <position position="655"/>
    </location>
</feature>
<feature type="glycosylation site" description="N-linked (GlcNAc...) asparagine" evidence="2">
    <location>
        <position position="747"/>
    </location>
</feature>
<feature type="glycosylation site" description="N-linked (GlcNAc...) asparagine" evidence="2">
    <location>
        <position position="826"/>
    </location>
</feature>
<feature type="disulfide bond" evidence="3">
    <location>
        <begin position="60"/>
        <end position="108"/>
    </location>
</feature>
<feature type="disulfide bond" evidence="3">
    <location>
        <begin position="157"/>
        <end position="214"/>
    </location>
</feature>
<feature type="disulfide bond" evidence="3">
    <location>
        <begin position="262"/>
        <end position="308"/>
    </location>
</feature>
<feature type="disulfide bond" evidence="3">
    <location>
        <begin position="357"/>
        <end position="415"/>
    </location>
</feature>
<feature type="disulfide bond" evidence="3">
    <location>
        <begin position="463"/>
        <end position="514"/>
    </location>
</feature>
<feature type="disulfide bond" evidence="3">
    <location>
        <begin position="560"/>
        <end position="615"/>
    </location>
</feature>
<feature type="splice variant" id="VSP_009835" description="In isoform 2." evidence="11">
    <original>VVVMPGSGAPCQSSPQLWGPMAIFLLALQR</original>
    <variation>GARREGGGGAESGGSCAWRGFLSVEGGCLGLNRGSECLSDGNHVALTV</variation>
    <location>
        <begin position="926"/>
        <end position="955"/>
    </location>
</feature>
<feature type="sequence variant" id="VAR_047660" description="In dbSNP:rs10947690.">
    <original>L</original>
    <variation>P</variation>
    <location>
        <position position="61"/>
    </location>
</feature>
<feature type="sequence variant" id="VAR_077845" description="In dbSNP:rs368283829." evidence="10">
    <original>P</original>
    <variation>S</variation>
    <location>
        <position position="935"/>
    </location>
</feature>
<feature type="strand" evidence="13">
    <location>
        <begin position="23"/>
        <end position="33"/>
    </location>
</feature>
<feature type="strand" evidence="13">
    <location>
        <begin position="36"/>
        <end position="40"/>
    </location>
</feature>
<feature type="strand" evidence="13">
    <location>
        <begin position="45"/>
        <end position="51"/>
    </location>
</feature>
<feature type="strand" evidence="13">
    <location>
        <begin position="56"/>
        <end position="66"/>
    </location>
</feature>
<feature type="strand" evidence="13">
    <location>
        <begin position="69"/>
        <end position="74"/>
    </location>
</feature>
<feature type="strand" evidence="13">
    <location>
        <begin position="77"/>
        <end position="79"/>
    </location>
</feature>
<feature type="helix" evidence="13">
    <location>
        <begin position="81"/>
        <end position="83"/>
    </location>
</feature>
<feature type="strand" evidence="13">
    <location>
        <begin position="93"/>
        <end position="95"/>
    </location>
</feature>
<feature type="helix" evidence="13">
    <location>
        <begin position="100"/>
        <end position="102"/>
    </location>
</feature>
<feature type="strand" evidence="13">
    <location>
        <begin position="104"/>
        <end position="111"/>
    </location>
</feature>
<feature type="strand" evidence="13">
    <location>
        <begin position="113"/>
        <end position="116"/>
    </location>
</feature>
<feature type="strand" evidence="13">
    <location>
        <begin position="118"/>
        <end position="129"/>
    </location>
</feature>
<feature type="strand" evidence="13">
    <location>
        <begin position="133"/>
        <end position="139"/>
    </location>
</feature>
<feature type="strand" evidence="13">
    <location>
        <begin position="152"/>
        <end position="158"/>
    </location>
</feature>
<feature type="strand" evidence="13">
    <location>
        <begin position="161"/>
        <end position="163"/>
    </location>
</feature>
<feature type="strand" evidence="13">
    <location>
        <begin position="166"/>
        <end position="174"/>
    </location>
</feature>
<feature type="turn" evidence="14">
    <location>
        <begin position="178"/>
        <end position="180"/>
    </location>
</feature>
<feature type="strand" evidence="13">
    <location>
        <begin position="184"/>
        <end position="187"/>
    </location>
</feature>
<feature type="strand" evidence="13">
    <location>
        <begin position="193"/>
        <end position="201"/>
    </location>
</feature>
<feature type="strand" evidence="13">
    <location>
        <begin position="206"/>
        <end position="208"/>
    </location>
</feature>
<feature type="strand" evidence="13">
    <location>
        <begin position="210"/>
        <end position="217"/>
    </location>
</feature>
<feature type="helix" evidence="13">
    <location>
        <begin position="221"/>
        <end position="223"/>
    </location>
</feature>
<feature type="strand" evidence="13">
    <location>
        <begin position="227"/>
        <end position="232"/>
    </location>
</feature>
<feature type="strand" evidence="14">
    <location>
        <begin position="241"/>
        <end position="246"/>
    </location>
</feature>
<feature type="strand" evidence="14">
    <location>
        <begin position="248"/>
        <end position="252"/>
    </location>
</feature>
<feature type="strand" evidence="14">
    <location>
        <begin position="258"/>
        <end position="266"/>
    </location>
</feature>
<feature type="strand" evidence="14">
    <location>
        <begin position="272"/>
        <end position="274"/>
    </location>
</feature>
<feature type="strand" evidence="14">
    <location>
        <begin position="292"/>
        <end position="297"/>
    </location>
</feature>
<feature type="helix" evidence="14">
    <location>
        <begin position="300"/>
        <end position="302"/>
    </location>
</feature>
<feature type="strand" evidence="14">
    <location>
        <begin position="304"/>
        <end position="311"/>
    </location>
</feature>
<feature type="strand" evidence="14">
    <location>
        <begin position="318"/>
        <end position="326"/>
    </location>
</feature>
<accession>Q8NFP4</accession>
<accession>A6NHG0</accession>
<accession>Q8NBE3</accession>
<evidence type="ECO:0000250" key="1"/>
<evidence type="ECO:0000255" key="2"/>
<evidence type="ECO:0000255" key="3">
    <source>
        <dbReference type="PROSITE-ProRule" id="PRU00114"/>
    </source>
</evidence>
<evidence type="ECO:0000255" key="4">
    <source>
        <dbReference type="PROSITE-ProRule" id="PRU00128"/>
    </source>
</evidence>
<evidence type="ECO:0000255" key="5">
    <source>
        <dbReference type="PROSITE-ProRule" id="PRU00316"/>
    </source>
</evidence>
<evidence type="ECO:0000256" key="6">
    <source>
        <dbReference type="SAM" id="MobiDB-lite"/>
    </source>
</evidence>
<evidence type="ECO:0000269" key="7">
    <source>
    </source>
</evidence>
<evidence type="ECO:0000269" key="8">
    <source>
    </source>
</evidence>
<evidence type="ECO:0000269" key="9">
    <source>
    </source>
</evidence>
<evidence type="ECO:0000269" key="10">
    <source>
    </source>
</evidence>
<evidence type="ECO:0000303" key="11">
    <source>
    </source>
</evidence>
<evidence type="ECO:0000305" key="12"/>
<evidence type="ECO:0007829" key="13">
    <source>
        <dbReference type="PDB" id="5V5W"/>
    </source>
</evidence>
<evidence type="ECO:0007829" key="14">
    <source>
        <dbReference type="PDB" id="5XEQ"/>
    </source>
</evidence>
<sequence length="955" mass="105790">MEVTCLLLLALIPFHCRGQGVYAPAQAQIVHAGQACVVKEDNISERVYTIREGDTLMLQCLVTGHPRPQVRWTKTAGSASDKFQETSVFNETLRIERIARTQGGRYYCKAENGVGVPAIKSIRVDVQYLDEPMLTVHQTVSDVRGNFYQEKTVFLRCTVNSNPPARFIWKRGSDTLSHSQDNGVDIYEPLYTQGETKVLKLKNLRPQDYASYTCQVSVRNVCGIPDKAITFRLTNTTAPPALKLSVNETLVVNPGENVTVQCLLTGGDPLPQLQWSHGPGPLPLGALAQGGTLSIPSVQARDSGYYNCTATNNVGNPAKKTVNLLVRSMKNATFQITPDVIKESENIQLGQDLKLSCHVDAVPQEKVTYQWFKNGKPARMSKRLLVTRNDPELPAVTSSLELIDLHFSDYGTYLCMASFPGAPVPDLSVEVNISSETVPPTISVPKGRAVVTVREGSPAELQCEVRGKPRPPVLWSRVDKEAALLPSGLPLEETPDGKLRLERVSRDMSGTYRCQTARYNGFNVRPREAQVQLNVQFPPEVEPSSQDVRQALGRPVLLRCSLLRGSPQRIASAVWRFKGQLLPPPPVVPAAAEAPDHAELRLDAVTRDSSGSYECSVSNDVGSAACLFQVSAKAYSPEFYFDTPNPTRSHKLSKNYSYVLQWTQREPDAVDPVLNYRLSIRQLNQHNAVVKAIPVRRVEKGQLLEYILTDLRVPHSYEVRLTPYTTFGAGDMASRIIHYTEPINSPNLSDNTCHFEDEKICGYTQDLTDNFDWTRQNALTQNPKRSPNTGPPTDISGTPEGYYMFIETSRPRELGDRARLVSPLYNASAKFYCVSFFYHMYGKHIGSLNLLVRSRNKGALDTHAWSLSGNKGNVWQQAHVPISPSGPFQIIFEGVRGPGYLGDIAIDDVTLKKGECPRKQTDPNKVVVMPGSGAPCQSSPQLWGPMAIFLLALQR</sequence>
<name>MDGA1_HUMAN</name>